<protein>
    <recommendedName>
        <fullName evidence="16">Ethylene-responsive transcription factor ERF071</fullName>
        <shortName evidence="15">AtERF71</shortName>
    </recommendedName>
    <alternativeName>
        <fullName evidence="13">Protein HYPOXIA RESPONSIVE ERF 2</fullName>
    </alternativeName>
</protein>
<reference key="1">
    <citation type="journal article" date="1999" name="Nature">
        <title>Sequence and analysis of chromosome 2 of the plant Arabidopsis thaliana.</title>
        <authorList>
            <person name="Lin X."/>
            <person name="Kaul S."/>
            <person name="Rounsley S.D."/>
            <person name="Shea T.P."/>
            <person name="Benito M.-I."/>
            <person name="Town C.D."/>
            <person name="Fujii C.Y."/>
            <person name="Mason T.M."/>
            <person name="Bowman C.L."/>
            <person name="Barnstead M.E."/>
            <person name="Feldblyum T.V."/>
            <person name="Buell C.R."/>
            <person name="Ketchum K.A."/>
            <person name="Lee J.J."/>
            <person name="Ronning C.M."/>
            <person name="Koo H.L."/>
            <person name="Moffat K.S."/>
            <person name="Cronin L.A."/>
            <person name="Shen M."/>
            <person name="Pai G."/>
            <person name="Van Aken S."/>
            <person name="Umayam L."/>
            <person name="Tallon L.J."/>
            <person name="Gill J.E."/>
            <person name="Adams M.D."/>
            <person name="Carrera A.J."/>
            <person name="Creasy T.H."/>
            <person name="Goodman H.M."/>
            <person name="Somerville C.R."/>
            <person name="Copenhaver G.P."/>
            <person name="Preuss D."/>
            <person name="Nierman W.C."/>
            <person name="White O."/>
            <person name="Eisen J.A."/>
            <person name="Salzberg S.L."/>
            <person name="Fraser C.M."/>
            <person name="Venter J.C."/>
        </authorList>
    </citation>
    <scope>NUCLEOTIDE SEQUENCE [LARGE SCALE GENOMIC DNA]</scope>
    <source>
        <strain>cv. Columbia</strain>
    </source>
</reference>
<reference key="2">
    <citation type="journal article" date="2017" name="Plant J.">
        <title>Araport11: a complete reannotation of the Arabidopsis thaliana reference genome.</title>
        <authorList>
            <person name="Cheng C.Y."/>
            <person name="Krishnakumar V."/>
            <person name="Chan A.P."/>
            <person name="Thibaud-Nissen F."/>
            <person name="Schobel S."/>
            <person name="Town C.D."/>
        </authorList>
    </citation>
    <scope>GENOME REANNOTATION</scope>
    <source>
        <strain>cv. Columbia</strain>
    </source>
</reference>
<reference key="3">
    <citation type="journal article" date="2003" name="Science">
        <title>Empirical analysis of transcriptional activity in the Arabidopsis genome.</title>
        <authorList>
            <person name="Yamada K."/>
            <person name="Lim J."/>
            <person name="Dale J.M."/>
            <person name="Chen H."/>
            <person name="Shinn P."/>
            <person name="Palm C.J."/>
            <person name="Southwick A.M."/>
            <person name="Wu H.C."/>
            <person name="Kim C.J."/>
            <person name="Nguyen M."/>
            <person name="Pham P.K."/>
            <person name="Cheuk R.F."/>
            <person name="Karlin-Newmann G."/>
            <person name="Liu S.X."/>
            <person name="Lam B."/>
            <person name="Sakano H."/>
            <person name="Wu T."/>
            <person name="Yu G."/>
            <person name="Miranda M."/>
            <person name="Quach H.L."/>
            <person name="Tripp M."/>
            <person name="Chang C.H."/>
            <person name="Lee J.M."/>
            <person name="Toriumi M.J."/>
            <person name="Chan M.M."/>
            <person name="Tang C.C."/>
            <person name="Onodera C.S."/>
            <person name="Deng J.M."/>
            <person name="Akiyama K."/>
            <person name="Ansari Y."/>
            <person name="Arakawa T."/>
            <person name="Banh J."/>
            <person name="Banno F."/>
            <person name="Bowser L."/>
            <person name="Brooks S.Y."/>
            <person name="Carninci P."/>
            <person name="Chao Q."/>
            <person name="Choy N."/>
            <person name="Enju A."/>
            <person name="Goldsmith A.D."/>
            <person name="Gurjal M."/>
            <person name="Hansen N.F."/>
            <person name="Hayashizaki Y."/>
            <person name="Johnson-Hopson C."/>
            <person name="Hsuan V.W."/>
            <person name="Iida K."/>
            <person name="Karnes M."/>
            <person name="Khan S."/>
            <person name="Koesema E."/>
            <person name="Ishida J."/>
            <person name="Jiang P.X."/>
            <person name="Jones T."/>
            <person name="Kawai J."/>
            <person name="Kamiya A."/>
            <person name="Meyers C."/>
            <person name="Nakajima M."/>
            <person name="Narusaka M."/>
            <person name="Seki M."/>
            <person name="Sakurai T."/>
            <person name="Satou M."/>
            <person name="Tamse R."/>
            <person name="Vaysberg M."/>
            <person name="Wallender E.K."/>
            <person name="Wong C."/>
            <person name="Yamamura Y."/>
            <person name="Yuan S."/>
            <person name="Shinozaki K."/>
            <person name="Davis R.W."/>
            <person name="Theologis A."/>
            <person name="Ecker J.R."/>
        </authorList>
    </citation>
    <scope>NUCLEOTIDE SEQUENCE [LARGE SCALE MRNA]</scope>
    <source>
        <strain>cv. Columbia</strain>
    </source>
</reference>
<reference key="4">
    <citation type="journal article" date="2006" name="Plant Physiol.">
        <title>Genome-wide analysis of the ERF gene family in Arabidopsis and rice.</title>
        <authorList>
            <person name="Nakano T."/>
            <person name="Suzuki K."/>
            <person name="Fujimura T."/>
            <person name="Shinshi H."/>
        </authorList>
    </citation>
    <scope>GENE FAMILY</scope>
    <scope>NOMENCLATURE</scope>
</reference>
<reference key="5">
    <citation type="journal article" date="2010" name="Plant J.">
        <title>HRE1 and HRE2, two hypoxia-inducible ethylene response factors, affect anaerobic responses in Arabidopsis thaliana.</title>
        <authorList>
            <person name="Licausi F."/>
            <person name="van Dongen J.T."/>
            <person name="Giuntoli B."/>
            <person name="Novi G."/>
            <person name="Santaniello A."/>
            <person name="Geigenberger P."/>
            <person name="Perata P."/>
        </authorList>
    </citation>
    <scope>FUNCTION</scope>
    <scope>SUBCELLULAR LOCATION</scope>
    <scope>INDUCTION BY HYPOXIA</scope>
</reference>
<reference key="6">
    <citation type="journal article" date="2011" name="Biochem. Biophys. Res. Commun.">
        <title>AtERF71/HRE2 transcription factor mediates osmotic stress response as well as hypoxia response in Arabidopsis.</title>
        <authorList>
            <person name="Park H.Y."/>
            <person name="Seok H.Y."/>
            <person name="Woo D.H."/>
            <person name="Lee S.Y."/>
            <person name="Tarte V.N."/>
            <person name="Lee E.H."/>
            <person name="Lee C.H."/>
            <person name="Moon Y.H."/>
        </authorList>
    </citation>
    <scope>FUNCTION</scope>
    <scope>SUBCELLULAR LOCATION</scope>
    <scope>INDUCTION</scope>
</reference>
<reference key="7">
    <citation type="journal article" date="2011" name="Nature">
        <title>Homeostatic response to hypoxia is regulated by the N-end rule pathway in plants.</title>
        <authorList>
            <person name="Gibbs D.J."/>
            <person name="Lee S.C."/>
            <person name="Isa N.M."/>
            <person name="Gramuglia S."/>
            <person name="Fukao T."/>
            <person name="Bassel G.W."/>
            <person name="Correia C.S."/>
            <person name="Corbineau F."/>
            <person name="Theodoulou F.L."/>
            <person name="Bailey-Serres J."/>
            <person name="Holdsworth M.J."/>
        </authorList>
    </citation>
    <scope>FUNCTION</scope>
    <scope>OXIDATION AT CYS-2</scope>
</reference>
<reference key="8">
    <citation type="journal article" date="2011" name="Physiol. Plantarum">
        <title>The hypoxia responsive transcription factor genes ERF71/HRE2 and ERF73/HRE1 of Arabidopsis are differentially regulated by ethylene.</title>
        <authorList>
            <person name="Hess N."/>
            <person name="Klode M."/>
            <person name="Anders M."/>
            <person name="Sauter M."/>
        </authorList>
    </citation>
    <scope>FUNCTION</scope>
    <scope>INDUCTION BY HYPOXIA</scope>
</reference>
<reference key="9">
    <citation type="journal article" date="2015" name="Plant Cell Rep.">
        <title>Arabidopsis AtERF71/HRE2 functions as transcriptional activator via cis-acting GCC box or DRE/CRT element and is involved in root development through regulation of root cell expansion.</title>
        <authorList>
            <person name="Lee S.Y."/>
            <person name="Hwang E.Y."/>
            <person name="Seok H.Y."/>
            <person name="Tarte V.N."/>
            <person name="Jeong M.S."/>
            <person name="Jang S.B."/>
            <person name="Moon Y.H."/>
        </authorList>
    </citation>
    <scope>FUNCTION</scope>
</reference>
<reference key="10">
    <citation type="journal article" date="2017" name="Plant Physiol.">
        <title>Root bending is antagonistically affected by hypoxia and ERF-mediated transcription via auxin signaling.</title>
        <authorList>
            <person name="Eysholdt-Derzso E."/>
            <person name="Sauter M."/>
        </authorList>
    </citation>
    <scope>FUNCTION</scope>
    <scope>INDUCTION BY HYPOXIA</scope>
</reference>
<reference key="11">
    <citation type="journal article" date="2018" name="Plant Biotechnol.">
        <title>The possible roles of AtERF71 in the defense response against the Fusarium graminearum.</title>
        <authorList>
            <person name="Yelli F."/>
            <person name="Kato T."/>
            <person name="Nishiuchi T."/>
        </authorList>
    </citation>
    <scope>FUNCTION</scope>
    <scope>INDUCTION BY FUSARIUM GRAMINEARUM</scope>
</reference>
<reference key="12">
    <citation type="journal article" date="2019" name="Ann. Bot.">
        <title>Nitrate nutrition influences multiple factors in order to increase energy efficiency under hypoxia in Arabidopsis.</title>
        <authorList>
            <person name="Wany A."/>
            <person name="Gupta A.K."/>
            <person name="Kumari A."/>
            <person name="Mishra S."/>
            <person name="Singh N."/>
            <person name="Pandey S."/>
            <person name="Vanvari R."/>
            <person name="Igamberdiev A.U."/>
            <person name="Fernie A.R."/>
            <person name="Gupta K.J."/>
        </authorList>
    </citation>
    <scope>FUNCTION</scope>
    <scope>INDUCTION BY HYPOXIA</scope>
</reference>
<reference key="13">
    <citation type="journal article" date="2019" name="Plant Biol.">
        <title>Hypoxia and the group VII ethylene response transcription factor HRE2 promote adventitious root elongation in Arabidopsis.</title>
        <authorList>
            <person name="Eysholdt-Derzso E."/>
            <person name="Sauter M."/>
        </authorList>
    </citation>
    <scope>FUNCTION</scope>
</reference>
<sequence>MCGGAIISDFIWSKSESEPSQLGSVSSRKKRKPVSVSEERDGKRERKNLYRGIRQRPWGKWAAEIRDPSKGVRVWLGTFKTADEAARAYDVAAIKIRGRKAKLNFPNTQVEEEADTKPGGNQNELISENQVESLSEDLMALEDYMRFYQIPVADDQSATDIGNLWSYQDSN</sequence>
<comment type="function">
    <text evidence="3 4 5 6 7 8 9 11">Transcriptional activator that binds specifically to the cis-acting element GCC box 5'-AGCCGCC-3', or to the CRT/DRE element 5'-[AG]CCGAC-3' (PubMed:25344007). Plays an important role in root development via root cell expansion regulation (PubMed:25344007). Transcriptional activator involved in the hypoxic stress response (PubMed:20113439, PubMed:21615413, PubMed:21946064). Plays a role in low oxygen signaling and contributes to tolerance to anoxia stress by enhancing anaerobic gene expression and ethanolic fermentation (PubMed:20113439, PubMed:22020279). Plays a role in the regulation of hypoxia-induced root slanting (PubMed:28698356). Contributes to the promotion of adventitious root elongation under hypoxia, an adaptation response that strengthens the root system in upper soil layers where oxygen shortage may last for shorter time periods (PubMed:29996004). Transcriptional activator involved in the osmotic stress response (PubMed:21946064). May play a role in defense response against the fungal pathogen Fusarium graminearum downstream of ethylene signaling (PubMed:31819723).</text>
</comment>
<comment type="subcellular location">
    <subcellularLocation>
        <location evidence="1 3 5">Nucleus</location>
    </subcellularLocation>
</comment>
<comment type="induction">
    <text evidence="3 4 5 8 10 11">Induced under hypoxic conditions in roots (PubMed:20113439, PubMed:21615413, PubMed:21946064, PubMed:28698356). Induced during hypoxia under nitrate nutrition (PubMed:30535180). Induced by osmotic stress (PubMed:21946064). Induced by infection with the fungal pathogen Fusarium graminearum (PubMed:31819723).</text>
</comment>
<comment type="PTM">
    <text evidence="17">In presence of oxygen, the N-terminal cysteine residue (Cys-2) of ERF71 can be oxidized by cysteine oxidases, thus preparing the protein for N-end rule pathway-mediated proteasomal degradation (Probable). Under low oxygen levels, Cys oxidation is prevented, ERF71 is stabilized and confers tolerance to hypoxia (Probable).</text>
</comment>
<comment type="similarity">
    <text evidence="16">Belongs to the AP2/ERF transcription factor family. ERF subfamily.</text>
</comment>
<keyword id="KW-0010">Activator</keyword>
<keyword id="KW-0238">DNA-binding</keyword>
<keyword id="KW-0936">Ethylene signaling pathway</keyword>
<keyword id="KW-0539">Nucleus</keyword>
<keyword id="KW-0558">Oxidation</keyword>
<keyword id="KW-0611">Plant defense</keyword>
<keyword id="KW-1185">Reference proteome</keyword>
<keyword id="KW-0346">Stress response</keyword>
<keyword id="KW-0804">Transcription</keyword>
<keyword id="KW-0805">Transcription regulation</keyword>
<dbReference type="EMBL" id="AC002535">
    <property type="protein sequence ID" value="AAC62858.1"/>
    <property type="molecule type" value="Genomic_DNA"/>
</dbReference>
<dbReference type="EMBL" id="CP002685">
    <property type="protein sequence ID" value="AEC10854.1"/>
    <property type="molecule type" value="Genomic_DNA"/>
</dbReference>
<dbReference type="EMBL" id="AY074645">
    <property type="protein sequence ID" value="AAL69461.1"/>
    <property type="molecule type" value="mRNA"/>
</dbReference>
<dbReference type="PIR" id="T00432">
    <property type="entry name" value="T00432"/>
</dbReference>
<dbReference type="RefSeq" id="NP_182274.1">
    <property type="nucleotide sequence ID" value="NM_130320.4"/>
</dbReference>
<dbReference type="SMR" id="O22259"/>
<dbReference type="ELM" id="O22259"/>
<dbReference type="FunCoup" id="O22259">
    <property type="interactions" value="24"/>
</dbReference>
<dbReference type="STRING" id="3702.O22259"/>
<dbReference type="PaxDb" id="3702-AT2G47520.1"/>
<dbReference type="ProteomicsDB" id="220565"/>
<dbReference type="EnsemblPlants" id="AT2G47520.1">
    <property type="protein sequence ID" value="AT2G47520.1"/>
    <property type="gene ID" value="AT2G47520"/>
</dbReference>
<dbReference type="GeneID" id="819365"/>
<dbReference type="Gramene" id="AT2G47520.1">
    <property type="protein sequence ID" value="AT2G47520.1"/>
    <property type="gene ID" value="AT2G47520"/>
</dbReference>
<dbReference type="KEGG" id="ath:AT2G47520"/>
<dbReference type="Araport" id="AT2G47520"/>
<dbReference type="TAIR" id="AT2G47520">
    <property type="gene designation" value="ERF71"/>
</dbReference>
<dbReference type="eggNOG" id="ENOG502QW91">
    <property type="taxonomic scope" value="Eukaryota"/>
</dbReference>
<dbReference type="HOGENOM" id="CLU_054468_2_0_1"/>
<dbReference type="InParanoid" id="O22259"/>
<dbReference type="OMA" id="IISDFIW"/>
<dbReference type="PhylomeDB" id="O22259"/>
<dbReference type="PRO" id="PR:O22259"/>
<dbReference type="Proteomes" id="UP000006548">
    <property type="component" value="Chromosome 2"/>
</dbReference>
<dbReference type="ExpressionAtlas" id="O22259">
    <property type="expression patterns" value="baseline and differential"/>
</dbReference>
<dbReference type="GO" id="GO:0005634">
    <property type="term" value="C:nucleus"/>
    <property type="evidence" value="ECO:0000314"/>
    <property type="project" value="TAIR"/>
</dbReference>
<dbReference type="GO" id="GO:0003700">
    <property type="term" value="F:DNA-binding transcription factor activity"/>
    <property type="evidence" value="ECO:0000250"/>
    <property type="project" value="TAIR"/>
</dbReference>
<dbReference type="GO" id="GO:1990837">
    <property type="term" value="F:sequence-specific double-stranded DNA binding"/>
    <property type="evidence" value="ECO:0000314"/>
    <property type="project" value="UniProtKB"/>
</dbReference>
<dbReference type="GO" id="GO:0071456">
    <property type="term" value="P:cellular response to hypoxia"/>
    <property type="evidence" value="ECO:0007007"/>
    <property type="project" value="TAIR"/>
</dbReference>
<dbReference type="GO" id="GO:0006952">
    <property type="term" value="P:defense response"/>
    <property type="evidence" value="ECO:0007669"/>
    <property type="project" value="UniProtKB-KW"/>
</dbReference>
<dbReference type="GO" id="GO:0009873">
    <property type="term" value="P:ethylene-activated signaling pathway"/>
    <property type="evidence" value="ECO:0007669"/>
    <property type="project" value="UniProtKB-KW"/>
</dbReference>
<dbReference type="GO" id="GO:0045893">
    <property type="term" value="P:positive regulation of DNA-templated transcription"/>
    <property type="evidence" value="ECO:0000314"/>
    <property type="project" value="UniProtKB"/>
</dbReference>
<dbReference type="GO" id="GO:2000280">
    <property type="term" value="P:regulation of root development"/>
    <property type="evidence" value="ECO:0000315"/>
    <property type="project" value="TAIR"/>
</dbReference>
<dbReference type="GO" id="GO:0034059">
    <property type="term" value="P:response to anoxia"/>
    <property type="evidence" value="ECO:0000316"/>
    <property type="project" value="TAIR"/>
</dbReference>
<dbReference type="GO" id="GO:0009414">
    <property type="term" value="P:response to water deprivation"/>
    <property type="evidence" value="ECO:0000314"/>
    <property type="project" value="UniProtKB"/>
</dbReference>
<dbReference type="CDD" id="cd00018">
    <property type="entry name" value="AP2"/>
    <property type="match status" value="1"/>
</dbReference>
<dbReference type="FunFam" id="3.30.730.10:FF:000001">
    <property type="entry name" value="Ethylene-responsive transcription factor 2"/>
    <property type="match status" value="1"/>
</dbReference>
<dbReference type="Gene3D" id="3.30.730.10">
    <property type="entry name" value="AP2/ERF domain"/>
    <property type="match status" value="1"/>
</dbReference>
<dbReference type="InterPro" id="IPR001471">
    <property type="entry name" value="AP2/ERF_dom"/>
</dbReference>
<dbReference type="InterPro" id="IPR036955">
    <property type="entry name" value="AP2/ERF_dom_sf"/>
</dbReference>
<dbReference type="InterPro" id="IPR016177">
    <property type="entry name" value="DNA-bd_dom_sf"/>
</dbReference>
<dbReference type="InterPro" id="IPR044808">
    <property type="entry name" value="ERF_plant"/>
</dbReference>
<dbReference type="PANTHER" id="PTHR31190">
    <property type="entry name" value="DNA-BINDING DOMAIN"/>
    <property type="match status" value="1"/>
</dbReference>
<dbReference type="PANTHER" id="PTHR31190:SF270">
    <property type="entry name" value="ETHYLENE-RESPONSIVE TRANSCRIPTION FACTOR ERF071"/>
    <property type="match status" value="1"/>
</dbReference>
<dbReference type="Pfam" id="PF00847">
    <property type="entry name" value="AP2"/>
    <property type="match status" value="1"/>
</dbReference>
<dbReference type="PRINTS" id="PR00367">
    <property type="entry name" value="ETHRSPELEMNT"/>
</dbReference>
<dbReference type="SMART" id="SM00380">
    <property type="entry name" value="AP2"/>
    <property type="match status" value="1"/>
</dbReference>
<dbReference type="SUPFAM" id="SSF54171">
    <property type="entry name" value="DNA-binding domain"/>
    <property type="match status" value="1"/>
</dbReference>
<dbReference type="PROSITE" id="PS51032">
    <property type="entry name" value="AP2_ERF"/>
    <property type="match status" value="1"/>
</dbReference>
<gene>
    <name evidence="12" type="primary">ERF071</name>
    <name evidence="14" type="synonym">ERF71</name>
    <name evidence="13" type="synonym">HRE2</name>
    <name evidence="18" type="ordered locus">At2g47520</name>
    <name evidence="19" type="ORF">T30B22.18</name>
</gene>
<proteinExistence type="evidence at protein level"/>
<name>ERF71_ARATH</name>
<organism>
    <name type="scientific">Arabidopsis thaliana</name>
    <name type="common">Mouse-ear cress</name>
    <dbReference type="NCBI Taxonomy" id="3702"/>
    <lineage>
        <taxon>Eukaryota</taxon>
        <taxon>Viridiplantae</taxon>
        <taxon>Streptophyta</taxon>
        <taxon>Embryophyta</taxon>
        <taxon>Tracheophyta</taxon>
        <taxon>Spermatophyta</taxon>
        <taxon>Magnoliopsida</taxon>
        <taxon>eudicotyledons</taxon>
        <taxon>Gunneridae</taxon>
        <taxon>Pentapetalae</taxon>
        <taxon>rosids</taxon>
        <taxon>malvids</taxon>
        <taxon>Brassicales</taxon>
        <taxon>Brassicaceae</taxon>
        <taxon>Camelineae</taxon>
        <taxon>Arabidopsis</taxon>
    </lineage>
</organism>
<evidence type="ECO:0000255" key="1">
    <source>
        <dbReference type="PROSITE-ProRule" id="PRU00366"/>
    </source>
</evidence>
<evidence type="ECO:0000256" key="2">
    <source>
        <dbReference type="SAM" id="MobiDB-lite"/>
    </source>
</evidence>
<evidence type="ECO:0000269" key="3">
    <source>
    </source>
</evidence>
<evidence type="ECO:0000269" key="4">
    <source>
    </source>
</evidence>
<evidence type="ECO:0000269" key="5">
    <source>
    </source>
</evidence>
<evidence type="ECO:0000269" key="6">
    <source>
    </source>
</evidence>
<evidence type="ECO:0000269" key="7">
    <source>
    </source>
</evidence>
<evidence type="ECO:0000269" key="8">
    <source>
    </source>
</evidence>
<evidence type="ECO:0000269" key="9">
    <source>
    </source>
</evidence>
<evidence type="ECO:0000269" key="10">
    <source>
    </source>
</evidence>
<evidence type="ECO:0000269" key="11">
    <source>
    </source>
</evidence>
<evidence type="ECO:0000303" key="12">
    <source>
    </source>
</evidence>
<evidence type="ECO:0000303" key="13">
    <source>
    </source>
</evidence>
<evidence type="ECO:0000303" key="14">
    <source>
    </source>
</evidence>
<evidence type="ECO:0000303" key="15">
    <source>
    </source>
</evidence>
<evidence type="ECO:0000305" key="16"/>
<evidence type="ECO:0000305" key="17">
    <source>
    </source>
</evidence>
<evidence type="ECO:0000312" key="18">
    <source>
        <dbReference type="Araport" id="AT2G47520"/>
    </source>
</evidence>
<evidence type="ECO:0000312" key="19">
    <source>
        <dbReference type="EMBL" id="AAC62858.1"/>
    </source>
</evidence>
<feature type="chain" id="PRO_0000290406" description="Ethylene-responsive transcription factor ERF071">
    <location>
        <begin position="1"/>
        <end position="171"/>
    </location>
</feature>
<feature type="DNA-binding region" description="AP2/ERF" evidence="1">
    <location>
        <begin position="49"/>
        <end position="106"/>
    </location>
</feature>
<feature type="region of interest" description="Disordered" evidence="2">
    <location>
        <begin position="16"/>
        <end position="48"/>
    </location>
</feature>
<feature type="compositionally biased region" description="Basic and acidic residues" evidence="2">
    <location>
        <begin position="37"/>
        <end position="48"/>
    </location>
</feature>
<feature type="modified residue" description="Cysteine sulfinic acid (-SO2H)" evidence="17">
    <location>
        <position position="2"/>
    </location>
</feature>
<accession>O22259</accession>